<protein>
    <recommendedName>
        <fullName evidence="1">Ribonuclease 3</fullName>
        <ecNumber evidence="1">3.1.26.3</ecNumber>
    </recommendedName>
    <alternativeName>
        <fullName evidence="1">Ribonuclease III</fullName>
        <shortName evidence="1">RNase III</shortName>
    </alternativeName>
</protein>
<proteinExistence type="inferred from homology"/>
<feature type="chain" id="PRO_1000075754" description="Ribonuclease 3">
    <location>
        <begin position="1"/>
        <end position="230"/>
    </location>
</feature>
<feature type="domain" description="RNase III" evidence="1">
    <location>
        <begin position="5"/>
        <end position="125"/>
    </location>
</feature>
<feature type="domain" description="DRBM" evidence="1">
    <location>
        <begin position="153"/>
        <end position="223"/>
    </location>
</feature>
<feature type="active site" evidence="1">
    <location>
        <position position="44"/>
    </location>
</feature>
<feature type="active site" evidence="1">
    <location>
        <position position="114"/>
    </location>
</feature>
<feature type="binding site" evidence="1">
    <location>
        <position position="40"/>
    </location>
    <ligand>
        <name>Mg(2+)</name>
        <dbReference type="ChEBI" id="CHEBI:18420"/>
    </ligand>
</feature>
<feature type="binding site" evidence="1">
    <location>
        <position position="111"/>
    </location>
    <ligand>
        <name>Mg(2+)</name>
        <dbReference type="ChEBI" id="CHEBI:18420"/>
    </ligand>
</feature>
<feature type="binding site" evidence="1">
    <location>
        <position position="114"/>
    </location>
    <ligand>
        <name>Mg(2+)</name>
        <dbReference type="ChEBI" id="CHEBI:18420"/>
    </ligand>
</feature>
<accession>Q14G66</accession>
<comment type="function">
    <text evidence="1">Digests double-stranded RNA. Involved in the processing of primary rRNA transcript to yield the immediate precursors to the large and small rRNAs (23S and 16S). Processes some mRNAs, and tRNAs when they are encoded in the rRNA operon. Processes pre-crRNA and tracrRNA of type II CRISPR loci if present in the organism.</text>
</comment>
<comment type="catalytic activity">
    <reaction evidence="1">
        <text>Endonucleolytic cleavage to 5'-phosphomonoester.</text>
        <dbReference type="EC" id="3.1.26.3"/>
    </reaction>
</comment>
<comment type="cofactor">
    <cofactor evidence="1">
        <name>Mg(2+)</name>
        <dbReference type="ChEBI" id="CHEBI:18420"/>
    </cofactor>
</comment>
<comment type="subunit">
    <text evidence="1">Homodimer.</text>
</comment>
<comment type="subcellular location">
    <subcellularLocation>
        <location evidence="1">Cytoplasm</location>
    </subcellularLocation>
</comment>
<comment type="similarity">
    <text evidence="1">Belongs to the ribonuclease III family.</text>
</comment>
<dbReference type="EC" id="3.1.26.3" evidence="1"/>
<dbReference type="EMBL" id="AM286280">
    <property type="protein sequence ID" value="CAL09571.1"/>
    <property type="molecule type" value="Genomic_DNA"/>
</dbReference>
<dbReference type="RefSeq" id="WP_003022451.1">
    <property type="nucleotide sequence ID" value="NC_008245.1"/>
</dbReference>
<dbReference type="SMR" id="Q14G66"/>
<dbReference type="KEGG" id="ftf:FTF1555c"/>
<dbReference type="HOGENOM" id="CLU_000907_1_1_6"/>
<dbReference type="GO" id="GO:0005737">
    <property type="term" value="C:cytoplasm"/>
    <property type="evidence" value="ECO:0007669"/>
    <property type="project" value="UniProtKB-SubCell"/>
</dbReference>
<dbReference type="GO" id="GO:0003725">
    <property type="term" value="F:double-stranded RNA binding"/>
    <property type="evidence" value="ECO:0007669"/>
    <property type="project" value="TreeGrafter"/>
</dbReference>
<dbReference type="GO" id="GO:0046872">
    <property type="term" value="F:metal ion binding"/>
    <property type="evidence" value="ECO:0007669"/>
    <property type="project" value="UniProtKB-KW"/>
</dbReference>
<dbReference type="GO" id="GO:0004525">
    <property type="term" value="F:ribonuclease III activity"/>
    <property type="evidence" value="ECO:0007669"/>
    <property type="project" value="UniProtKB-UniRule"/>
</dbReference>
<dbReference type="GO" id="GO:0019843">
    <property type="term" value="F:rRNA binding"/>
    <property type="evidence" value="ECO:0007669"/>
    <property type="project" value="UniProtKB-KW"/>
</dbReference>
<dbReference type="GO" id="GO:0006397">
    <property type="term" value="P:mRNA processing"/>
    <property type="evidence" value="ECO:0007669"/>
    <property type="project" value="UniProtKB-UniRule"/>
</dbReference>
<dbReference type="GO" id="GO:0010468">
    <property type="term" value="P:regulation of gene expression"/>
    <property type="evidence" value="ECO:0007669"/>
    <property type="project" value="TreeGrafter"/>
</dbReference>
<dbReference type="GO" id="GO:0006364">
    <property type="term" value="P:rRNA processing"/>
    <property type="evidence" value="ECO:0007669"/>
    <property type="project" value="UniProtKB-UniRule"/>
</dbReference>
<dbReference type="GO" id="GO:0008033">
    <property type="term" value="P:tRNA processing"/>
    <property type="evidence" value="ECO:0007669"/>
    <property type="project" value="UniProtKB-KW"/>
</dbReference>
<dbReference type="CDD" id="cd10845">
    <property type="entry name" value="DSRM_RNAse_III_family"/>
    <property type="match status" value="1"/>
</dbReference>
<dbReference type="CDD" id="cd00593">
    <property type="entry name" value="RIBOc"/>
    <property type="match status" value="1"/>
</dbReference>
<dbReference type="FunFam" id="1.10.1520.10:FF:000001">
    <property type="entry name" value="Ribonuclease 3"/>
    <property type="match status" value="1"/>
</dbReference>
<dbReference type="Gene3D" id="3.30.160.20">
    <property type="match status" value="1"/>
</dbReference>
<dbReference type="Gene3D" id="1.10.1520.10">
    <property type="entry name" value="Ribonuclease III domain"/>
    <property type="match status" value="1"/>
</dbReference>
<dbReference type="HAMAP" id="MF_00104">
    <property type="entry name" value="RNase_III"/>
    <property type="match status" value="1"/>
</dbReference>
<dbReference type="InterPro" id="IPR014720">
    <property type="entry name" value="dsRBD_dom"/>
</dbReference>
<dbReference type="InterPro" id="IPR011907">
    <property type="entry name" value="RNase_III"/>
</dbReference>
<dbReference type="InterPro" id="IPR000999">
    <property type="entry name" value="RNase_III_dom"/>
</dbReference>
<dbReference type="InterPro" id="IPR036389">
    <property type="entry name" value="RNase_III_sf"/>
</dbReference>
<dbReference type="NCBIfam" id="TIGR02191">
    <property type="entry name" value="RNaseIII"/>
    <property type="match status" value="1"/>
</dbReference>
<dbReference type="PANTHER" id="PTHR11207:SF0">
    <property type="entry name" value="RIBONUCLEASE 3"/>
    <property type="match status" value="1"/>
</dbReference>
<dbReference type="PANTHER" id="PTHR11207">
    <property type="entry name" value="RIBONUCLEASE III"/>
    <property type="match status" value="1"/>
</dbReference>
<dbReference type="Pfam" id="PF00035">
    <property type="entry name" value="dsrm"/>
    <property type="match status" value="1"/>
</dbReference>
<dbReference type="Pfam" id="PF14622">
    <property type="entry name" value="Ribonucleas_3_3"/>
    <property type="match status" value="1"/>
</dbReference>
<dbReference type="SMART" id="SM00358">
    <property type="entry name" value="DSRM"/>
    <property type="match status" value="1"/>
</dbReference>
<dbReference type="SMART" id="SM00535">
    <property type="entry name" value="RIBOc"/>
    <property type="match status" value="1"/>
</dbReference>
<dbReference type="SUPFAM" id="SSF54768">
    <property type="entry name" value="dsRNA-binding domain-like"/>
    <property type="match status" value="1"/>
</dbReference>
<dbReference type="SUPFAM" id="SSF69065">
    <property type="entry name" value="RNase III domain-like"/>
    <property type="match status" value="1"/>
</dbReference>
<dbReference type="PROSITE" id="PS50137">
    <property type="entry name" value="DS_RBD"/>
    <property type="match status" value="1"/>
</dbReference>
<dbReference type="PROSITE" id="PS00517">
    <property type="entry name" value="RNASE_3_1"/>
    <property type="match status" value="1"/>
</dbReference>
<dbReference type="PROSITE" id="PS50142">
    <property type="entry name" value="RNASE_3_2"/>
    <property type="match status" value="1"/>
</dbReference>
<name>RNC_FRAT1</name>
<evidence type="ECO:0000255" key="1">
    <source>
        <dbReference type="HAMAP-Rule" id="MF_00104"/>
    </source>
</evidence>
<reference key="1">
    <citation type="journal article" date="2007" name="PLoS ONE">
        <title>Genome sequencing shows that European isolates of Francisella tularensis subspecies tularensis are almost identical to US laboratory strain Schu S4.</title>
        <authorList>
            <person name="Chaudhuri R.R."/>
            <person name="Ren C.-P."/>
            <person name="Desmond L."/>
            <person name="Vincent G.A."/>
            <person name="Silman N.J."/>
            <person name="Brehm J.K."/>
            <person name="Elmore M.J."/>
            <person name="Hudson M.J."/>
            <person name="Forsman M."/>
            <person name="Isherwood K.E."/>
            <person name="Gurycova D."/>
            <person name="Minton N.P."/>
            <person name="Titball R.W."/>
            <person name="Pallen M.J."/>
            <person name="Vipond R."/>
        </authorList>
    </citation>
    <scope>NUCLEOTIDE SEQUENCE [LARGE SCALE GENOMIC DNA]</scope>
    <source>
        <strain>FSC 198</strain>
    </source>
</reference>
<gene>
    <name evidence="1" type="primary">rnc</name>
    <name type="ordered locus">FTF1555c</name>
</gene>
<sequence>MVPEYSRFYNILGYNFKDYTLLIRALTHRSKTKKNYERLEFLGDSVLSFVIAEVLYKQFIDLAEGKLSQLRSKLVKGATLAQLASSLKMDEYIILGASEQGGHKREKILEDVFEAVIGAIYLDSDFATVKKVILKWYQPIISSINLDTIKVKDSKSKLQEILLQNALSLPEYSIETIDGKDHEQQFTVVAVSKDLNLRVKAQGTSRKKAEQKTAEKMIEMLSQQGLHEKK</sequence>
<keyword id="KW-0963">Cytoplasm</keyword>
<keyword id="KW-0255">Endonuclease</keyword>
<keyword id="KW-0378">Hydrolase</keyword>
<keyword id="KW-0460">Magnesium</keyword>
<keyword id="KW-0479">Metal-binding</keyword>
<keyword id="KW-0507">mRNA processing</keyword>
<keyword id="KW-0540">Nuclease</keyword>
<keyword id="KW-0694">RNA-binding</keyword>
<keyword id="KW-0698">rRNA processing</keyword>
<keyword id="KW-0699">rRNA-binding</keyword>
<keyword id="KW-0819">tRNA processing</keyword>
<organism>
    <name type="scientific">Francisella tularensis subsp. tularensis (strain FSC 198)</name>
    <dbReference type="NCBI Taxonomy" id="393115"/>
    <lineage>
        <taxon>Bacteria</taxon>
        <taxon>Pseudomonadati</taxon>
        <taxon>Pseudomonadota</taxon>
        <taxon>Gammaproteobacteria</taxon>
        <taxon>Thiotrichales</taxon>
        <taxon>Francisellaceae</taxon>
        <taxon>Francisella</taxon>
    </lineage>
</organism>